<protein>
    <recommendedName>
        <fullName evidence="1">Carboxy-S-adenosyl-L-methionine synthase</fullName>
        <shortName evidence="1">Cx-SAM synthase</shortName>
        <ecNumber evidence="1">2.1.3.-</ecNumber>
    </recommendedName>
</protein>
<gene>
    <name evidence="1" type="primary">cmoA</name>
    <name type="ordered locus">VV1_2154</name>
</gene>
<proteinExistence type="inferred from homology"/>
<feature type="chain" id="PRO_0000314402" description="Carboxy-S-adenosyl-L-methionine synthase">
    <location>
        <begin position="1"/>
        <end position="245"/>
    </location>
</feature>
<feature type="binding site" evidence="1">
    <location>
        <position position="42"/>
    </location>
    <ligand>
        <name>S-adenosyl-L-methionine</name>
        <dbReference type="ChEBI" id="CHEBI:59789"/>
    </ligand>
</feature>
<feature type="binding site" evidence="1">
    <location>
        <begin position="67"/>
        <end position="69"/>
    </location>
    <ligand>
        <name>S-adenosyl-L-methionine</name>
        <dbReference type="ChEBI" id="CHEBI:59789"/>
    </ligand>
</feature>
<feature type="binding site" evidence="1">
    <location>
        <begin position="92"/>
        <end position="93"/>
    </location>
    <ligand>
        <name>S-adenosyl-L-methionine</name>
        <dbReference type="ChEBI" id="CHEBI:59789"/>
    </ligand>
</feature>
<feature type="binding site" evidence="1">
    <location>
        <begin position="120"/>
        <end position="121"/>
    </location>
    <ligand>
        <name>S-adenosyl-L-methionine</name>
        <dbReference type="ChEBI" id="CHEBI:59789"/>
    </ligand>
</feature>
<feature type="binding site" evidence="1">
    <location>
        <position position="135"/>
    </location>
    <ligand>
        <name>S-adenosyl-L-methionine</name>
        <dbReference type="ChEBI" id="CHEBI:59789"/>
    </ligand>
</feature>
<feature type="binding site" evidence="1">
    <location>
        <position position="202"/>
    </location>
    <ligand>
        <name>S-adenosyl-L-methionine</name>
        <dbReference type="ChEBI" id="CHEBI:59789"/>
    </ligand>
</feature>
<sequence>MNPKSNPDTIFSAPIDKIGDFTFDERVAEVFPDMIQRSVPGYSNIISAIGMLAERFVKPHSNVYDLGCSLGAATLSMRRHIKQEGCQIIAVDNSKAMVERCKLHVNAYRSDTPVNVIEADIRHIDIENASVVVLNFTLQFLSPEDRYVLLEKIYAGLRPGGILILSEKYVFEDQVSNELLIDLHHDFKRANGYSELEISQKRSAIENVMRPDSKKQHKERFAQIGFSSYDVWFQCFNFGSMFAIK</sequence>
<comment type="function">
    <text evidence="1">Catalyzes the conversion of S-adenosyl-L-methionine (SAM) to carboxy-S-adenosyl-L-methionine (Cx-SAM).</text>
</comment>
<comment type="catalytic activity">
    <reaction evidence="1">
        <text>prephenate + S-adenosyl-L-methionine = carboxy-S-adenosyl-L-methionine + 3-phenylpyruvate + H2O</text>
        <dbReference type="Rhea" id="RHEA:51692"/>
        <dbReference type="ChEBI" id="CHEBI:15377"/>
        <dbReference type="ChEBI" id="CHEBI:18005"/>
        <dbReference type="ChEBI" id="CHEBI:29934"/>
        <dbReference type="ChEBI" id="CHEBI:59789"/>
        <dbReference type="ChEBI" id="CHEBI:134278"/>
    </reaction>
</comment>
<comment type="subunit">
    <text evidence="1">Homodimer.</text>
</comment>
<comment type="similarity">
    <text evidence="1">Belongs to the class I-like SAM-binding methyltransferase superfamily. Cx-SAM synthase family.</text>
</comment>
<comment type="sequence caution" evidence="2">
    <conflict type="erroneous initiation">
        <sequence resource="EMBL-CDS" id="AAO10539"/>
    </conflict>
</comment>
<evidence type="ECO:0000255" key="1">
    <source>
        <dbReference type="HAMAP-Rule" id="MF_01589"/>
    </source>
</evidence>
<evidence type="ECO:0000305" key="2"/>
<name>CMOA_VIBVU</name>
<reference key="1">
    <citation type="submission" date="2002-12" db="EMBL/GenBank/DDBJ databases">
        <title>Complete genome sequence of Vibrio vulnificus CMCP6.</title>
        <authorList>
            <person name="Rhee J.H."/>
            <person name="Kim S.Y."/>
            <person name="Chung S.S."/>
            <person name="Kim J.J."/>
            <person name="Moon Y.H."/>
            <person name="Jeong H."/>
            <person name="Choy H.E."/>
        </authorList>
    </citation>
    <scope>NUCLEOTIDE SEQUENCE [LARGE SCALE GENOMIC DNA]</scope>
    <source>
        <strain>CMCP6</strain>
    </source>
</reference>
<accession>Q8DAN9</accession>
<dbReference type="EC" id="2.1.3.-" evidence="1"/>
<dbReference type="EMBL" id="AE016795">
    <property type="protein sequence ID" value="AAO10539.1"/>
    <property type="status" value="ALT_INIT"/>
    <property type="molecule type" value="Genomic_DNA"/>
</dbReference>
<dbReference type="RefSeq" id="WP_043920963.1">
    <property type="nucleotide sequence ID" value="NC_004459.3"/>
</dbReference>
<dbReference type="SMR" id="Q8DAN9"/>
<dbReference type="KEGG" id="vvu:VV1_2154"/>
<dbReference type="HOGENOM" id="CLU_078475_0_0_6"/>
<dbReference type="Proteomes" id="UP000002275">
    <property type="component" value="Chromosome 1"/>
</dbReference>
<dbReference type="GO" id="GO:0016743">
    <property type="term" value="F:carboxyl- or carbamoyltransferase activity"/>
    <property type="evidence" value="ECO:0007669"/>
    <property type="project" value="UniProtKB-UniRule"/>
</dbReference>
<dbReference type="GO" id="GO:1904047">
    <property type="term" value="F:S-adenosyl-L-methionine binding"/>
    <property type="evidence" value="ECO:0007669"/>
    <property type="project" value="UniProtKB-UniRule"/>
</dbReference>
<dbReference type="GO" id="GO:0002098">
    <property type="term" value="P:tRNA wobble uridine modification"/>
    <property type="evidence" value="ECO:0007669"/>
    <property type="project" value="InterPro"/>
</dbReference>
<dbReference type="CDD" id="cd02440">
    <property type="entry name" value="AdoMet_MTases"/>
    <property type="match status" value="1"/>
</dbReference>
<dbReference type="Gene3D" id="3.40.50.150">
    <property type="entry name" value="Vaccinia Virus protein VP39"/>
    <property type="match status" value="1"/>
</dbReference>
<dbReference type="HAMAP" id="MF_01589">
    <property type="entry name" value="Cx_SAM_synthase"/>
    <property type="match status" value="1"/>
</dbReference>
<dbReference type="InterPro" id="IPR005271">
    <property type="entry name" value="CmoA"/>
</dbReference>
<dbReference type="InterPro" id="IPR041698">
    <property type="entry name" value="Methyltransf_25"/>
</dbReference>
<dbReference type="InterPro" id="IPR029063">
    <property type="entry name" value="SAM-dependent_MTases_sf"/>
</dbReference>
<dbReference type="NCBIfam" id="TIGR00740">
    <property type="entry name" value="carboxy-S-adenosyl-L-methionine synthase CmoA"/>
    <property type="match status" value="1"/>
</dbReference>
<dbReference type="NCBIfam" id="NF011995">
    <property type="entry name" value="PRK15451.1"/>
    <property type="match status" value="1"/>
</dbReference>
<dbReference type="PANTHER" id="PTHR43861:SF2">
    <property type="entry name" value="CARBOXY-S-ADENOSYL-L-METHIONINE SYNTHASE"/>
    <property type="match status" value="1"/>
</dbReference>
<dbReference type="PANTHER" id="PTHR43861">
    <property type="entry name" value="TRANS-ACONITATE 2-METHYLTRANSFERASE-RELATED"/>
    <property type="match status" value="1"/>
</dbReference>
<dbReference type="Pfam" id="PF13649">
    <property type="entry name" value="Methyltransf_25"/>
    <property type="match status" value="1"/>
</dbReference>
<dbReference type="PIRSF" id="PIRSF006325">
    <property type="entry name" value="MeTrfase_bac"/>
    <property type="match status" value="1"/>
</dbReference>
<dbReference type="SUPFAM" id="SSF53335">
    <property type="entry name" value="S-adenosyl-L-methionine-dependent methyltransferases"/>
    <property type="match status" value="1"/>
</dbReference>
<keyword id="KW-0949">S-adenosyl-L-methionine</keyword>
<keyword id="KW-0808">Transferase</keyword>
<organism>
    <name type="scientific">Vibrio vulnificus (strain CMCP6)</name>
    <dbReference type="NCBI Taxonomy" id="216895"/>
    <lineage>
        <taxon>Bacteria</taxon>
        <taxon>Pseudomonadati</taxon>
        <taxon>Pseudomonadota</taxon>
        <taxon>Gammaproteobacteria</taxon>
        <taxon>Vibrionales</taxon>
        <taxon>Vibrionaceae</taxon>
        <taxon>Vibrio</taxon>
    </lineage>
</organism>